<reference key="1">
    <citation type="journal article" date="2007" name="J. Bacteriol.">
        <title>Genome of the opportunistic pathogen Streptococcus sanguinis.</title>
        <authorList>
            <person name="Xu P."/>
            <person name="Alves J.M."/>
            <person name="Kitten T."/>
            <person name="Brown A."/>
            <person name="Chen Z."/>
            <person name="Ozaki L.S."/>
            <person name="Manque P."/>
            <person name="Ge X."/>
            <person name="Serrano M.G."/>
            <person name="Puiu D."/>
            <person name="Hendricks S."/>
            <person name="Wang Y."/>
            <person name="Chaplin M.D."/>
            <person name="Akan D."/>
            <person name="Paik S."/>
            <person name="Peterson D.L."/>
            <person name="Macrina F.L."/>
            <person name="Buck G.A."/>
        </authorList>
    </citation>
    <scope>NUCLEOTIDE SEQUENCE [LARGE SCALE GENOMIC DNA]</scope>
    <source>
        <strain>SK36</strain>
    </source>
</reference>
<name>Y1878_STRSV</name>
<evidence type="ECO:0000255" key="1">
    <source>
        <dbReference type="HAMAP-Rule" id="MF_01103"/>
    </source>
</evidence>
<evidence type="ECO:0000256" key="2">
    <source>
        <dbReference type="SAM" id="MobiDB-lite"/>
    </source>
</evidence>
<comment type="subcellular location">
    <subcellularLocation>
        <location evidence="1">Cytoplasm</location>
    </subcellularLocation>
</comment>
<comment type="similarity">
    <text evidence="1">Belongs to the UPF0291 family.</text>
</comment>
<proteinExistence type="inferred from homology"/>
<dbReference type="EMBL" id="CP000387">
    <property type="protein sequence ID" value="ABN45259.1"/>
    <property type="molecule type" value="Genomic_DNA"/>
</dbReference>
<dbReference type="RefSeq" id="WP_002901318.1">
    <property type="nucleotide sequence ID" value="NC_009009.1"/>
</dbReference>
<dbReference type="RefSeq" id="YP_001035809.1">
    <property type="nucleotide sequence ID" value="NC_009009.1"/>
</dbReference>
<dbReference type="SMR" id="A3CQ04"/>
<dbReference type="STRING" id="388919.SSA_1878"/>
<dbReference type="KEGG" id="ssa:SSA_1878"/>
<dbReference type="PATRIC" id="fig|388919.9.peg.1783"/>
<dbReference type="eggNOG" id="COG4224">
    <property type="taxonomic scope" value="Bacteria"/>
</dbReference>
<dbReference type="HOGENOM" id="CLU_173137_0_2_9"/>
<dbReference type="OrthoDB" id="390105at2"/>
<dbReference type="Proteomes" id="UP000002148">
    <property type="component" value="Chromosome"/>
</dbReference>
<dbReference type="GO" id="GO:0005737">
    <property type="term" value="C:cytoplasm"/>
    <property type="evidence" value="ECO:0007669"/>
    <property type="project" value="UniProtKB-SubCell"/>
</dbReference>
<dbReference type="Gene3D" id="1.10.287.540">
    <property type="entry name" value="Helix hairpin bin"/>
    <property type="match status" value="1"/>
</dbReference>
<dbReference type="HAMAP" id="MF_01103">
    <property type="entry name" value="UPF0291"/>
    <property type="match status" value="1"/>
</dbReference>
<dbReference type="InterPro" id="IPR009242">
    <property type="entry name" value="DUF896"/>
</dbReference>
<dbReference type="NCBIfam" id="NF002711">
    <property type="entry name" value="PRK02539.1"/>
    <property type="match status" value="1"/>
</dbReference>
<dbReference type="PANTHER" id="PTHR37300">
    <property type="entry name" value="UPF0291 PROTEIN CBO2609/CLC_2481"/>
    <property type="match status" value="1"/>
</dbReference>
<dbReference type="PANTHER" id="PTHR37300:SF1">
    <property type="entry name" value="UPF0291 PROTEIN YNZC"/>
    <property type="match status" value="1"/>
</dbReference>
<dbReference type="Pfam" id="PF05979">
    <property type="entry name" value="DUF896"/>
    <property type="match status" value="1"/>
</dbReference>
<dbReference type="SUPFAM" id="SSF158221">
    <property type="entry name" value="YnzC-like"/>
    <property type="match status" value="1"/>
</dbReference>
<keyword id="KW-0963">Cytoplasm</keyword>
<keyword id="KW-1185">Reference proteome</keyword>
<sequence>MDPKKIARINELAKKKKTEGLTAEEKVEQAKLREEYIEGYRRSVRHHIEGIKIVDEDGNDVTPEKLRQVQREKGLHGRSLDDPES</sequence>
<accession>A3CQ04</accession>
<feature type="chain" id="PRO_1000065036" description="UPF0291 protein SSA_1878">
    <location>
        <begin position="1"/>
        <end position="85"/>
    </location>
</feature>
<feature type="region of interest" description="Disordered" evidence="2">
    <location>
        <begin position="58"/>
        <end position="85"/>
    </location>
</feature>
<feature type="compositionally biased region" description="Basic and acidic residues" evidence="2">
    <location>
        <begin position="62"/>
        <end position="85"/>
    </location>
</feature>
<protein>
    <recommendedName>
        <fullName evidence="1">UPF0291 protein SSA_1878</fullName>
    </recommendedName>
</protein>
<gene>
    <name type="ordered locus">SSA_1878</name>
</gene>
<organism>
    <name type="scientific">Streptococcus sanguinis (strain SK36)</name>
    <dbReference type="NCBI Taxonomy" id="388919"/>
    <lineage>
        <taxon>Bacteria</taxon>
        <taxon>Bacillati</taxon>
        <taxon>Bacillota</taxon>
        <taxon>Bacilli</taxon>
        <taxon>Lactobacillales</taxon>
        <taxon>Streptococcaceae</taxon>
        <taxon>Streptococcus</taxon>
    </lineage>
</organism>